<protein>
    <recommendedName>
        <fullName evidence="1">Putative manganese efflux pump MntP</fullName>
    </recommendedName>
</protein>
<organism>
    <name type="scientific">Serratia proteamaculans (strain 568)</name>
    <dbReference type="NCBI Taxonomy" id="399741"/>
    <lineage>
        <taxon>Bacteria</taxon>
        <taxon>Pseudomonadati</taxon>
        <taxon>Pseudomonadota</taxon>
        <taxon>Gammaproteobacteria</taxon>
        <taxon>Enterobacterales</taxon>
        <taxon>Yersiniaceae</taxon>
        <taxon>Serratia</taxon>
    </lineage>
</organism>
<keyword id="KW-0997">Cell inner membrane</keyword>
<keyword id="KW-1003">Cell membrane</keyword>
<keyword id="KW-0406">Ion transport</keyword>
<keyword id="KW-0464">Manganese</keyword>
<keyword id="KW-0472">Membrane</keyword>
<keyword id="KW-0812">Transmembrane</keyword>
<keyword id="KW-1133">Transmembrane helix</keyword>
<keyword id="KW-0813">Transport</keyword>
<proteinExistence type="inferred from homology"/>
<dbReference type="EMBL" id="CP000826">
    <property type="protein sequence ID" value="ABV41918.1"/>
    <property type="molecule type" value="Genomic_DNA"/>
</dbReference>
<dbReference type="SMR" id="A8GFM8"/>
<dbReference type="KEGG" id="spe:Spro_2817"/>
<dbReference type="eggNOG" id="COG1971">
    <property type="taxonomic scope" value="Bacteria"/>
</dbReference>
<dbReference type="HOGENOM" id="CLU_096410_0_0_6"/>
<dbReference type="OrthoDB" id="9811590at2"/>
<dbReference type="GO" id="GO:0005886">
    <property type="term" value="C:plasma membrane"/>
    <property type="evidence" value="ECO:0007669"/>
    <property type="project" value="UniProtKB-SubCell"/>
</dbReference>
<dbReference type="GO" id="GO:0005384">
    <property type="term" value="F:manganese ion transmembrane transporter activity"/>
    <property type="evidence" value="ECO:0007669"/>
    <property type="project" value="UniProtKB-UniRule"/>
</dbReference>
<dbReference type="HAMAP" id="MF_01521">
    <property type="entry name" value="MntP_pump"/>
    <property type="match status" value="1"/>
</dbReference>
<dbReference type="InterPro" id="IPR003810">
    <property type="entry name" value="Mntp/YtaF"/>
</dbReference>
<dbReference type="InterPro" id="IPR022929">
    <property type="entry name" value="Put_MntP"/>
</dbReference>
<dbReference type="NCBIfam" id="NF008546">
    <property type="entry name" value="PRK11469.1"/>
    <property type="match status" value="1"/>
</dbReference>
<dbReference type="PANTHER" id="PTHR35529">
    <property type="entry name" value="MANGANESE EFFLUX PUMP MNTP-RELATED"/>
    <property type="match status" value="1"/>
</dbReference>
<dbReference type="PANTHER" id="PTHR35529:SF1">
    <property type="entry name" value="MANGANESE EFFLUX PUMP MNTP-RELATED"/>
    <property type="match status" value="1"/>
</dbReference>
<dbReference type="Pfam" id="PF02659">
    <property type="entry name" value="Mntp"/>
    <property type="match status" value="1"/>
</dbReference>
<name>MNTP_SERP5</name>
<evidence type="ECO:0000255" key="1">
    <source>
        <dbReference type="HAMAP-Rule" id="MF_01521"/>
    </source>
</evidence>
<accession>A8GFM8</accession>
<feature type="chain" id="PRO_1000068638" description="Putative manganese efflux pump MntP">
    <location>
        <begin position="1"/>
        <end position="189"/>
    </location>
</feature>
<feature type="transmembrane region" description="Helical" evidence="1">
    <location>
        <begin position="3"/>
        <end position="23"/>
    </location>
</feature>
<feature type="transmembrane region" description="Helical" evidence="1">
    <location>
        <begin position="41"/>
        <end position="61"/>
    </location>
</feature>
<feature type="transmembrane region" description="Helical" evidence="1">
    <location>
        <begin position="65"/>
        <end position="85"/>
    </location>
</feature>
<feature type="transmembrane region" description="Helical" evidence="1">
    <location>
        <begin position="103"/>
        <end position="123"/>
    </location>
</feature>
<feature type="transmembrane region" description="Helical" evidence="1">
    <location>
        <begin position="132"/>
        <end position="152"/>
    </location>
</feature>
<feature type="transmembrane region" description="Helical" evidence="1">
    <location>
        <begin position="167"/>
        <end position="187"/>
    </location>
</feature>
<comment type="function">
    <text evidence="1">Probably functions as a manganese efflux pump.</text>
</comment>
<comment type="subcellular location">
    <subcellularLocation>
        <location evidence="1">Cell inner membrane</location>
        <topology evidence="1">Multi-pass membrane protein</topology>
    </subcellularLocation>
</comment>
<comment type="similarity">
    <text evidence="1">Belongs to the MntP (TC 9.B.29) family.</text>
</comment>
<sequence length="189" mass="20339">MNLSATLILAFGMSMDAFAASIGKGASLHQPRFREALRTGLIFGVVEAITPIIGWGIGLFASQYIMEWDHWVAFSLLFILGMRMIVEGVRNRPDEVEKVKRHGFWLLVATAIATSLDAMAIGVGLAFLQVNIVHTAMAIGCATMIMATLGMMIGRFIGPLLGKRAEILGGVVLIGIGVNILLEHLGYLA</sequence>
<gene>
    <name evidence="1" type="primary">mntP</name>
    <name type="ordered locus">Spro_2817</name>
</gene>
<reference key="1">
    <citation type="submission" date="2007-09" db="EMBL/GenBank/DDBJ databases">
        <title>Complete sequence of chromosome of Serratia proteamaculans 568.</title>
        <authorList>
            <consortium name="US DOE Joint Genome Institute"/>
            <person name="Copeland A."/>
            <person name="Lucas S."/>
            <person name="Lapidus A."/>
            <person name="Barry K."/>
            <person name="Glavina del Rio T."/>
            <person name="Dalin E."/>
            <person name="Tice H."/>
            <person name="Pitluck S."/>
            <person name="Chain P."/>
            <person name="Malfatti S."/>
            <person name="Shin M."/>
            <person name="Vergez L."/>
            <person name="Schmutz J."/>
            <person name="Larimer F."/>
            <person name="Land M."/>
            <person name="Hauser L."/>
            <person name="Kyrpides N."/>
            <person name="Kim E."/>
            <person name="Taghavi S."/>
            <person name="Newman L."/>
            <person name="Vangronsveld J."/>
            <person name="van der Lelie D."/>
            <person name="Richardson P."/>
        </authorList>
    </citation>
    <scope>NUCLEOTIDE SEQUENCE [LARGE SCALE GENOMIC DNA]</scope>
    <source>
        <strain>568</strain>
    </source>
</reference>